<gene>
    <name evidence="1" type="primary">rpl14e</name>
    <name type="ordered locus">Tneu_0079</name>
</gene>
<accession>B1YA63</accession>
<protein>
    <recommendedName>
        <fullName evidence="1">Large ribosomal subunit protein eL14</fullName>
    </recommendedName>
    <alternativeName>
        <fullName evidence="2">50S ribosomal protein L14e</fullName>
    </alternativeName>
</protein>
<comment type="similarity">
    <text evidence="1">Belongs to the eukaryotic ribosomal protein eL14 family.</text>
</comment>
<sequence length="103" mass="11439">MVKVIDVGRVVVKVLGREAGRKAVVVDIVDENYVVITGPKQLTGVRRRRVNVNHIEPTDKKVEVKRGASDEEVLKAVEAAGLADYMRERVKPQMFGITASEVR</sequence>
<feature type="chain" id="PRO_1000132638" description="Large ribosomal subunit protein eL14">
    <location>
        <begin position="1"/>
        <end position="103"/>
    </location>
</feature>
<name>RL14E_PYRNV</name>
<keyword id="KW-0687">Ribonucleoprotein</keyword>
<keyword id="KW-0689">Ribosomal protein</keyword>
<organism>
    <name type="scientific">Pyrobaculum neutrophilum (strain DSM 2338 / JCM 9278 / NBRC 100436 / V24Sta)</name>
    <name type="common">Thermoproteus neutrophilus</name>
    <dbReference type="NCBI Taxonomy" id="444157"/>
    <lineage>
        <taxon>Archaea</taxon>
        <taxon>Thermoproteota</taxon>
        <taxon>Thermoprotei</taxon>
        <taxon>Thermoproteales</taxon>
        <taxon>Thermoproteaceae</taxon>
        <taxon>Pyrobaculum</taxon>
    </lineage>
</organism>
<reference key="1">
    <citation type="submission" date="2008-03" db="EMBL/GenBank/DDBJ databases">
        <title>Complete sequence of Thermoproteus neutrophilus V24Sta.</title>
        <authorList>
            <consortium name="US DOE Joint Genome Institute"/>
            <person name="Copeland A."/>
            <person name="Lucas S."/>
            <person name="Lapidus A."/>
            <person name="Glavina del Rio T."/>
            <person name="Dalin E."/>
            <person name="Tice H."/>
            <person name="Bruce D."/>
            <person name="Goodwin L."/>
            <person name="Pitluck S."/>
            <person name="Sims D."/>
            <person name="Brettin T."/>
            <person name="Detter J.C."/>
            <person name="Han C."/>
            <person name="Kuske C.R."/>
            <person name="Schmutz J."/>
            <person name="Larimer F."/>
            <person name="Land M."/>
            <person name="Hauser L."/>
            <person name="Kyrpides N."/>
            <person name="Mikhailova N."/>
            <person name="Biddle J.F."/>
            <person name="Zhang Z."/>
            <person name="Fitz-Gibbon S.T."/>
            <person name="Lowe T.M."/>
            <person name="Saltikov C."/>
            <person name="House C.H."/>
            <person name="Richardson P."/>
        </authorList>
    </citation>
    <scope>NUCLEOTIDE SEQUENCE [LARGE SCALE GENOMIC DNA]</scope>
    <source>
        <strain>DSM 2338 / JCM 9278 / NBRC 100436 / V24Sta</strain>
    </source>
</reference>
<dbReference type="EMBL" id="CP001014">
    <property type="protein sequence ID" value="ACB39037.1"/>
    <property type="molecule type" value="Genomic_DNA"/>
</dbReference>
<dbReference type="RefSeq" id="WP_012349458.1">
    <property type="nucleotide sequence ID" value="NC_010525.1"/>
</dbReference>
<dbReference type="SMR" id="B1YA63"/>
<dbReference type="STRING" id="444157.Tneu_0079"/>
<dbReference type="GeneID" id="6164987"/>
<dbReference type="KEGG" id="tne:Tneu_0079"/>
<dbReference type="eggNOG" id="arCOG04167">
    <property type="taxonomic scope" value="Archaea"/>
</dbReference>
<dbReference type="HOGENOM" id="CLU_183474_0_0_2"/>
<dbReference type="OrthoDB" id="63594at2157"/>
<dbReference type="Proteomes" id="UP000001694">
    <property type="component" value="Chromosome"/>
</dbReference>
<dbReference type="GO" id="GO:0022625">
    <property type="term" value="C:cytosolic large ribosomal subunit"/>
    <property type="evidence" value="ECO:0007669"/>
    <property type="project" value="TreeGrafter"/>
</dbReference>
<dbReference type="GO" id="GO:0003723">
    <property type="term" value="F:RNA binding"/>
    <property type="evidence" value="ECO:0007669"/>
    <property type="project" value="InterPro"/>
</dbReference>
<dbReference type="GO" id="GO:0003735">
    <property type="term" value="F:structural constituent of ribosome"/>
    <property type="evidence" value="ECO:0007669"/>
    <property type="project" value="InterPro"/>
</dbReference>
<dbReference type="GO" id="GO:0042273">
    <property type="term" value="P:ribosomal large subunit biogenesis"/>
    <property type="evidence" value="ECO:0007669"/>
    <property type="project" value="TreeGrafter"/>
</dbReference>
<dbReference type="GO" id="GO:0006412">
    <property type="term" value="P:translation"/>
    <property type="evidence" value="ECO:0007669"/>
    <property type="project" value="UniProtKB-UniRule"/>
</dbReference>
<dbReference type="CDD" id="cd06088">
    <property type="entry name" value="KOW_RPL14"/>
    <property type="match status" value="1"/>
</dbReference>
<dbReference type="FunFam" id="2.30.30.30:FF:000045">
    <property type="entry name" value="50S ribosomal protein L14e"/>
    <property type="match status" value="1"/>
</dbReference>
<dbReference type="Gene3D" id="2.30.30.30">
    <property type="match status" value="1"/>
</dbReference>
<dbReference type="HAMAP" id="MF_00721">
    <property type="entry name" value="Ribosomal_eL14"/>
    <property type="match status" value="1"/>
</dbReference>
<dbReference type="InterPro" id="IPR014722">
    <property type="entry name" value="Rib_uL2_dom2"/>
</dbReference>
<dbReference type="InterPro" id="IPR039660">
    <property type="entry name" value="Ribosomal_eL14"/>
</dbReference>
<dbReference type="InterPro" id="IPR023651">
    <property type="entry name" value="Ribosomal_eL14_arc"/>
</dbReference>
<dbReference type="InterPro" id="IPR041985">
    <property type="entry name" value="Ribosomal_eL14_KOW"/>
</dbReference>
<dbReference type="InterPro" id="IPR008991">
    <property type="entry name" value="Translation_prot_SH3-like_sf"/>
</dbReference>
<dbReference type="NCBIfam" id="NF003320">
    <property type="entry name" value="PRK04333.1"/>
    <property type="match status" value="1"/>
</dbReference>
<dbReference type="PANTHER" id="PTHR11127">
    <property type="entry name" value="60S RIBOSOMAL PROTEIN L14"/>
    <property type="match status" value="1"/>
</dbReference>
<dbReference type="PANTHER" id="PTHR11127:SF2">
    <property type="entry name" value="LARGE RIBOSOMAL SUBUNIT PROTEIN EL14"/>
    <property type="match status" value="1"/>
</dbReference>
<dbReference type="SUPFAM" id="SSF50104">
    <property type="entry name" value="Translation proteins SH3-like domain"/>
    <property type="match status" value="1"/>
</dbReference>
<proteinExistence type="inferred from homology"/>
<evidence type="ECO:0000255" key="1">
    <source>
        <dbReference type="HAMAP-Rule" id="MF_00721"/>
    </source>
</evidence>
<evidence type="ECO:0000305" key="2"/>